<proteinExistence type="evidence at transcript level"/>
<feature type="transit peptide" description="Mitochondrion" evidence="1">
    <location>
        <begin position="1"/>
        <end position="25"/>
    </location>
</feature>
<feature type="chain" id="PRO_0000002540" description="ATP synthase subunit s, mitochondrial">
    <location>
        <begin position="26"/>
        <end position="200"/>
    </location>
</feature>
<feature type="repeat" description="LRR 1" evidence="1">
    <location>
        <begin position="62"/>
        <end position="87"/>
    </location>
</feature>
<feature type="repeat" description="LRR 2" evidence="1">
    <location>
        <begin position="88"/>
        <end position="116"/>
    </location>
</feature>
<feature type="repeat" description="LRR 3" evidence="1">
    <location>
        <begin position="117"/>
        <end position="141"/>
    </location>
</feature>
<feature type="repeat" description="LRR 4" evidence="1">
    <location>
        <begin position="142"/>
        <end position="173"/>
    </location>
</feature>
<feature type="region of interest" description="N-terminal domain" evidence="1">
    <location>
        <begin position="1"/>
        <end position="61"/>
    </location>
</feature>
<feature type="binding site" evidence="1">
    <location>
        <position position="59"/>
    </location>
    <ligand>
        <name>Mg(2+)</name>
        <dbReference type="ChEBI" id="CHEBI:18420"/>
    </ligand>
</feature>
<feature type="binding site" evidence="1">
    <location>
        <position position="93"/>
    </location>
    <ligand>
        <name>Mg(2+)</name>
        <dbReference type="ChEBI" id="CHEBI:18420"/>
    </ligand>
</feature>
<feature type="sequence conflict" description="In Ref. 1; CAI29702." evidence="3" ref="1">
    <original>R</original>
    <variation>G</variation>
    <location>
        <position position="43"/>
    </location>
</feature>
<feature type="sequence conflict" description="In Ref. 1; CAI29702." evidence="3" ref="1">
    <original>K</original>
    <variation>E</variation>
    <location>
        <position position="200"/>
    </location>
</feature>
<reference key="1">
    <citation type="submission" date="2004-11" db="EMBL/GenBank/DDBJ databases">
        <authorList>
            <consortium name="The German cDNA consortium"/>
        </authorList>
    </citation>
    <scope>NUCLEOTIDE SEQUENCE [LARGE SCALE MRNA]</scope>
    <source>
        <tissue>Brain cortex</tissue>
        <tissue>Heart</tissue>
    </source>
</reference>
<name>ATP5S_PONAB</name>
<sequence length="200" mass="23199">MMLFGKISQQLCGVKKLPWSCDSRYFWGWLNAVFNKVDYDRIRDVGPDRAASEWLLRCGAMVRYHGQERWQKDYNHLPTGPLDKYKIQAIDATDSCIMSIGFDHMEGLEHVEKIRLCKCHYIEDDCLLRLSQLENLQKTILEMEIISCGNITDKGIIALLHLRNLKYLLLSDLPGVREKENLVQAFKTALPSLELKLQLK</sequence>
<evidence type="ECO:0000250" key="1">
    <source>
        <dbReference type="UniProtKB" id="P22027"/>
    </source>
</evidence>
<evidence type="ECO:0000250" key="2">
    <source>
        <dbReference type="UniProtKB" id="Q99766"/>
    </source>
</evidence>
<evidence type="ECO:0000305" key="3"/>
<dbReference type="EMBL" id="CR859443">
    <property type="protein sequence ID" value="CAH91614.1"/>
    <property type="molecule type" value="mRNA"/>
</dbReference>
<dbReference type="EMBL" id="CR926075">
    <property type="protein sequence ID" value="CAI29702.1"/>
    <property type="molecule type" value="mRNA"/>
</dbReference>
<dbReference type="RefSeq" id="NP_001127111.1">
    <property type="nucleotide sequence ID" value="NM_001133639.1"/>
</dbReference>
<dbReference type="RefSeq" id="XP_009247330.2">
    <property type="nucleotide sequence ID" value="XM_009249055.3"/>
</dbReference>
<dbReference type="RefSeq" id="XP_009247331.2">
    <property type="nucleotide sequence ID" value="XM_009249056.4"/>
</dbReference>
<dbReference type="RefSeq" id="XP_054385813.2">
    <property type="nucleotide sequence ID" value="XM_054529838.2"/>
</dbReference>
<dbReference type="RefSeq" id="XP_054385814.2">
    <property type="nucleotide sequence ID" value="XM_054529839.2"/>
</dbReference>
<dbReference type="RefSeq" id="XP_054385815.2">
    <property type="nucleotide sequence ID" value="XM_054529840.2"/>
</dbReference>
<dbReference type="RefSeq" id="XP_054385816.2">
    <property type="nucleotide sequence ID" value="XM_054529841.2"/>
</dbReference>
<dbReference type="RefSeq" id="XP_054385818.2">
    <property type="nucleotide sequence ID" value="XM_054529843.2"/>
</dbReference>
<dbReference type="SMR" id="Q5R9E6"/>
<dbReference type="STRING" id="9601.ENSPPYP00000006591"/>
<dbReference type="GeneID" id="100174151"/>
<dbReference type="KEGG" id="pon:100174151"/>
<dbReference type="CTD" id="27109"/>
<dbReference type="eggNOG" id="KOG3864">
    <property type="taxonomic scope" value="Eukaryota"/>
</dbReference>
<dbReference type="InParanoid" id="Q5R9E6"/>
<dbReference type="OrthoDB" id="5859291at2759"/>
<dbReference type="Proteomes" id="UP000001595">
    <property type="component" value="Unplaced"/>
</dbReference>
<dbReference type="GO" id="GO:0005743">
    <property type="term" value="C:mitochondrial inner membrane"/>
    <property type="evidence" value="ECO:0007669"/>
    <property type="project" value="UniProtKB-SubCell"/>
</dbReference>
<dbReference type="GO" id="GO:0045259">
    <property type="term" value="C:proton-transporting ATP synthase complex"/>
    <property type="evidence" value="ECO:0007669"/>
    <property type="project" value="UniProtKB-KW"/>
</dbReference>
<dbReference type="GO" id="GO:0046872">
    <property type="term" value="F:metal ion binding"/>
    <property type="evidence" value="ECO:0007669"/>
    <property type="project" value="UniProtKB-KW"/>
</dbReference>
<dbReference type="GO" id="GO:0006754">
    <property type="term" value="P:ATP biosynthetic process"/>
    <property type="evidence" value="ECO:0007669"/>
    <property type="project" value="UniProtKB-KW"/>
</dbReference>
<dbReference type="GO" id="GO:1902600">
    <property type="term" value="P:proton transmembrane transport"/>
    <property type="evidence" value="ECO:0007669"/>
    <property type="project" value="UniProtKB-KW"/>
</dbReference>
<dbReference type="FunFam" id="3.80.10.10:FF:000216">
    <property type="entry name" value="ATP synthase subunit s, mitochondrial isoform X1"/>
    <property type="match status" value="1"/>
</dbReference>
<dbReference type="Gene3D" id="3.80.10.10">
    <property type="entry name" value="Ribonuclease Inhibitor"/>
    <property type="match status" value="1"/>
</dbReference>
<dbReference type="InterPro" id="IPR032675">
    <property type="entry name" value="LRR_dom_sf"/>
</dbReference>
<dbReference type="SUPFAM" id="SSF52047">
    <property type="entry name" value="RNI-like"/>
    <property type="match status" value="1"/>
</dbReference>
<protein>
    <recommendedName>
        <fullName>ATP synthase subunit s, mitochondrial</fullName>
    </recommendedName>
    <alternativeName>
        <fullName>ATP synthase-coupling factor B</fullName>
        <shortName>FB</shortName>
    </alternativeName>
    <alternativeName>
        <fullName evidence="2">Distal membrane arm assembly complex 2-like protein</fullName>
    </alternativeName>
    <alternativeName>
        <fullName>Mitochondrial ATP synthase regulatory component factor B</fullName>
    </alternativeName>
</protein>
<accession>Q5R9E6</accession>
<accession>Q5NVG1</accession>
<gene>
    <name type="primary">DMAC2L</name>
    <name type="synonym">ATP5S</name>
</gene>
<organism>
    <name type="scientific">Pongo abelii</name>
    <name type="common">Sumatran orangutan</name>
    <name type="synonym">Pongo pygmaeus abelii</name>
    <dbReference type="NCBI Taxonomy" id="9601"/>
    <lineage>
        <taxon>Eukaryota</taxon>
        <taxon>Metazoa</taxon>
        <taxon>Chordata</taxon>
        <taxon>Craniata</taxon>
        <taxon>Vertebrata</taxon>
        <taxon>Euteleostomi</taxon>
        <taxon>Mammalia</taxon>
        <taxon>Eutheria</taxon>
        <taxon>Euarchontoglires</taxon>
        <taxon>Primates</taxon>
        <taxon>Haplorrhini</taxon>
        <taxon>Catarrhini</taxon>
        <taxon>Hominidae</taxon>
        <taxon>Pongo</taxon>
    </lineage>
</organism>
<comment type="function">
    <text evidence="1">Involved in regulation of mitochondrial membrane ATP synthase. Necessary for H(+) conduction of ATP synthase. Facilitates energy-driven catalysis of ATP synthesis by blocking a proton leak through an alternative proton exit pathway.</text>
</comment>
<comment type="subunit">
    <text evidence="1">Homotetramer. Associates with ATP synthase.</text>
</comment>
<comment type="subcellular location">
    <subcellularLocation>
        <location evidence="1">Mitochondrion</location>
    </subcellularLocation>
    <subcellularLocation>
        <location evidence="1">Mitochondrion inner membrane</location>
    </subcellularLocation>
</comment>
<comment type="similarity">
    <text evidence="3">Belongs to the ATP synthase subunit s family.</text>
</comment>
<keyword id="KW-0066">ATP synthesis</keyword>
<keyword id="KW-0138">CF(0)</keyword>
<keyword id="KW-0375">Hydrogen ion transport</keyword>
<keyword id="KW-0406">Ion transport</keyword>
<keyword id="KW-0433">Leucine-rich repeat</keyword>
<keyword id="KW-0460">Magnesium</keyword>
<keyword id="KW-0472">Membrane</keyword>
<keyword id="KW-0479">Metal-binding</keyword>
<keyword id="KW-0496">Mitochondrion</keyword>
<keyword id="KW-0999">Mitochondrion inner membrane</keyword>
<keyword id="KW-1185">Reference proteome</keyword>
<keyword id="KW-0677">Repeat</keyword>
<keyword id="KW-0809">Transit peptide</keyword>
<keyword id="KW-0813">Transport</keyword>